<keyword id="KW-0058">Aromatic hydrocarbons catabolism</keyword>
<keyword id="KW-0274">FAD</keyword>
<keyword id="KW-0285">Flavoprotein</keyword>
<keyword id="KW-0288">FMN</keyword>
<keyword id="KW-0442">Lipid degradation</keyword>
<keyword id="KW-0443">Lipid metabolism</keyword>
<keyword id="KW-0520">NAD</keyword>
<keyword id="KW-0560">Oxidoreductase</keyword>
<keyword id="KW-1185">Reference proteome</keyword>
<keyword id="KW-0753">Steroid metabolism</keyword>
<evidence type="ECO:0000250" key="1"/>
<evidence type="ECO:0000269" key="2">
    <source>
    </source>
</evidence>
<evidence type="ECO:0000269" key="3">
    <source>
    </source>
</evidence>
<evidence type="ECO:0000305" key="4"/>
<name>HSAB_MYCTU</name>
<accession>P9WND9</accession>
<accession>L0TG39</accession>
<accession>P96849</accession>
<accession>Q7D598</accession>
<protein>
    <recommendedName>
        <fullName>Flavin-dependent monooxygenase, reductase subunit HsaB</fullName>
        <ecNumber>1.5.1.36</ecNumber>
    </recommendedName>
    <alternativeName>
        <fullName>3-hydroxy-9,10-secoandrosta-1,3,5(10)-triene-9,17-dione 4-hydroxylase, reductase subunit</fullName>
    </alternativeName>
    <alternativeName>
        <fullName>Flavin:NADH reductase</fullName>
    </alternativeName>
</protein>
<comment type="function">
    <text evidence="3">Catalyzes the reduction of free flavins (FMN or FAD) by NADH. Subsequently, the reduced flavins diffuse to the HsaA oxygenase subunit.</text>
</comment>
<comment type="catalytic activity">
    <reaction>
        <text>a reduced flavin + NAD(+) = an oxidized flavin + NADH + 2 H(+)</text>
        <dbReference type="Rhea" id="RHEA:31303"/>
        <dbReference type="ChEBI" id="CHEBI:15378"/>
        <dbReference type="ChEBI" id="CHEBI:57540"/>
        <dbReference type="ChEBI" id="CHEBI:57945"/>
        <dbReference type="ChEBI" id="CHEBI:60531"/>
        <dbReference type="ChEBI" id="CHEBI:62787"/>
        <dbReference type="EC" id="1.5.1.36"/>
    </reaction>
</comment>
<comment type="pathway">
    <text>Lipid metabolism; steroid biosynthesis.</text>
</comment>
<comment type="subunit">
    <text>HsaAB monooxygenase consists of an oxygenase component HsaA and a reductase component HsaB.</text>
</comment>
<comment type="induction">
    <text evidence="2">Induced by KstR.</text>
</comment>
<comment type="miscellaneous">
    <text>Cholesterol metabolism contributes to the survival of M.tuberculosis in the host by helping the bacterial multiplication during earlier stages of infection and to the dissemination of the pathogen in the host.</text>
</comment>
<comment type="similarity">
    <text evidence="4">Belongs to the non-flavoprotein flavin reductase family.</text>
</comment>
<dbReference type="EC" id="1.5.1.36"/>
<dbReference type="EMBL" id="AL123456">
    <property type="protein sequence ID" value="CCP46390.1"/>
    <property type="molecule type" value="Genomic_DNA"/>
</dbReference>
<dbReference type="PIR" id="E70605">
    <property type="entry name" value="E70605"/>
</dbReference>
<dbReference type="RefSeq" id="NP_218084.1">
    <property type="nucleotide sequence ID" value="NC_000962.3"/>
</dbReference>
<dbReference type="RefSeq" id="WP_003900713.1">
    <property type="nucleotide sequence ID" value="NZ_NVQJ01000014.1"/>
</dbReference>
<dbReference type="SMR" id="P9WND9"/>
<dbReference type="FunCoup" id="P9WND9">
    <property type="interactions" value="12"/>
</dbReference>
<dbReference type="STRING" id="83332.Rv3567c"/>
<dbReference type="PaxDb" id="83332-Rv3567c"/>
<dbReference type="DNASU" id="887525"/>
<dbReference type="GeneID" id="887525"/>
<dbReference type="KEGG" id="mtu:Rv3567c"/>
<dbReference type="KEGG" id="mtv:RVBD_3567c"/>
<dbReference type="TubercuList" id="Rv3567c"/>
<dbReference type="eggNOG" id="COG1853">
    <property type="taxonomic scope" value="Bacteria"/>
</dbReference>
<dbReference type="InParanoid" id="P9WND9"/>
<dbReference type="OrthoDB" id="9792858at2"/>
<dbReference type="PhylomeDB" id="P9WND9"/>
<dbReference type="BioCyc" id="MetaCyc:G185E-7845-MONOMER"/>
<dbReference type="SABIO-RK" id="P9WND9"/>
<dbReference type="UniPathway" id="UPA00062"/>
<dbReference type="Proteomes" id="UP000001584">
    <property type="component" value="Chromosome"/>
</dbReference>
<dbReference type="GO" id="GO:0050660">
    <property type="term" value="F:flavin adenine dinucleotide binding"/>
    <property type="evidence" value="ECO:0000314"/>
    <property type="project" value="UniProtKB"/>
</dbReference>
<dbReference type="GO" id="GO:0036382">
    <property type="term" value="F:flavin reductase (NADH) activity"/>
    <property type="evidence" value="ECO:0007669"/>
    <property type="project" value="UniProtKB-EC"/>
</dbReference>
<dbReference type="GO" id="GO:0010181">
    <property type="term" value="F:FMN binding"/>
    <property type="evidence" value="ECO:0007669"/>
    <property type="project" value="InterPro"/>
</dbReference>
<dbReference type="GO" id="GO:0016646">
    <property type="term" value="F:oxidoreductase activity, acting on the CH-NH group of donors, NAD or NADP as acceptor"/>
    <property type="evidence" value="ECO:0000314"/>
    <property type="project" value="MTBBASE"/>
</dbReference>
<dbReference type="GO" id="GO:0042602">
    <property type="term" value="F:riboflavin reductase (NADPH) activity"/>
    <property type="evidence" value="ECO:0000318"/>
    <property type="project" value="GO_Central"/>
</dbReference>
<dbReference type="GO" id="GO:0006707">
    <property type="term" value="P:cholesterol catabolic process"/>
    <property type="evidence" value="ECO:0000314"/>
    <property type="project" value="MTBBASE"/>
</dbReference>
<dbReference type="GO" id="GO:0006694">
    <property type="term" value="P:steroid biosynthetic process"/>
    <property type="evidence" value="ECO:0000314"/>
    <property type="project" value="UniProtKB"/>
</dbReference>
<dbReference type="FunFam" id="2.30.110.10:FF:000017">
    <property type="entry name" value="Flavin-dependent monooxygenase, reductase subunit"/>
    <property type="match status" value="1"/>
</dbReference>
<dbReference type="Gene3D" id="2.30.110.10">
    <property type="entry name" value="Electron Transport, Fmn-binding Protein, Chain A"/>
    <property type="match status" value="1"/>
</dbReference>
<dbReference type="InterPro" id="IPR002563">
    <property type="entry name" value="Flavin_Rdtase-like_dom"/>
</dbReference>
<dbReference type="InterPro" id="IPR054682">
    <property type="entry name" value="HsaB"/>
</dbReference>
<dbReference type="InterPro" id="IPR050268">
    <property type="entry name" value="NADH-dep_flavin_reductase"/>
</dbReference>
<dbReference type="InterPro" id="IPR012349">
    <property type="entry name" value="Split_barrel_FMN-bd"/>
</dbReference>
<dbReference type="NCBIfam" id="NF045630">
    <property type="entry name" value="monooxsub_HsaB"/>
    <property type="match status" value="1"/>
</dbReference>
<dbReference type="PANTHER" id="PTHR30466">
    <property type="entry name" value="FLAVIN REDUCTASE"/>
    <property type="match status" value="1"/>
</dbReference>
<dbReference type="PANTHER" id="PTHR30466:SF11">
    <property type="entry name" value="FLAVIN-DEPENDENT MONOOXYGENASE, REDUCTASE SUBUNIT HSAB"/>
    <property type="match status" value="1"/>
</dbReference>
<dbReference type="Pfam" id="PF01613">
    <property type="entry name" value="Flavin_Reduct"/>
    <property type="match status" value="1"/>
</dbReference>
<dbReference type="SMART" id="SM00903">
    <property type="entry name" value="Flavin_Reduct"/>
    <property type="match status" value="1"/>
</dbReference>
<dbReference type="SUPFAM" id="SSF50475">
    <property type="entry name" value="FMN-binding split barrel"/>
    <property type="match status" value="1"/>
</dbReference>
<proteinExistence type="evidence at protein level"/>
<organism>
    <name type="scientific">Mycobacterium tuberculosis (strain ATCC 25618 / H37Rv)</name>
    <dbReference type="NCBI Taxonomy" id="83332"/>
    <lineage>
        <taxon>Bacteria</taxon>
        <taxon>Bacillati</taxon>
        <taxon>Actinomycetota</taxon>
        <taxon>Actinomycetes</taxon>
        <taxon>Mycobacteriales</taxon>
        <taxon>Mycobacteriaceae</taxon>
        <taxon>Mycobacterium</taxon>
        <taxon>Mycobacterium tuberculosis complex</taxon>
    </lineage>
</organism>
<reference key="1">
    <citation type="journal article" date="1998" name="Nature">
        <title>Deciphering the biology of Mycobacterium tuberculosis from the complete genome sequence.</title>
        <authorList>
            <person name="Cole S.T."/>
            <person name="Brosch R."/>
            <person name="Parkhill J."/>
            <person name="Garnier T."/>
            <person name="Churcher C.M."/>
            <person name="Harris D.E."/>
            <person name="Gordon S.V."/>
            <person name="Eiglmeier K."/>
            <person name="Gas S."/>
            <person name="Barry C.E. III"/>
            <person name="Tekaia F."/>
            <person name="Badcock K."/>
            <person name="Basham D."/>
            <person name="Brown D."/>
            <person name="Chillingworth T."/>
            <person name="Connor R."/>
            <person name="Davies R.M."/>
            <person name="Devlin K."/>
            <person name="Feltwell T."/>
            <person name="Gentles S."/>
            <person name="Hamlin N."/>
            <person name="Holroyd S."/>
            <person name="Hornsby T."/>
            <person name="Jagels K."/>
            <person name="Krogh A."/>
            <person name="McLean J."/>
            <person name="Moule S."/>
            <person name="Murphy L.D."/>
            <person name="Oliver S."/>
            <person name="Osborne J."/>
            <person name="Quail M.A."/>
            <person name="Rajandream M.A."/>
            <person name="Rogers J."/>
            <person name="Rutter S."/>
            <person name="Seeger K."/>
            <person name="Skelton S."/>
            <person name="Squares S."/>
            <person name="Squares R."/>
            <person name="Sulston J.E."/>
            <person name="Taylor K."/>
            <person name="Whitehead S."/>
            <person name="Barrell B.G."/>
        </authorList>
    </citation>
    <scope>NUCLEOTIDE SEQUENCE [LARGE SCALE GENOMIC DNA]</scope>
    <source>
        <strain>ATCC 25618 / H37Rv</strain>
    </source>
</reference>
<reference key="2">
    <citation type="journal article" date="2007" name="Mol. Microbiol.">
        <title>A highly conserved transcriptional repressor controls a large regulon involved in lipid degradation in Mycobacterium smegmatis and Mycobacterium tuberculosis.</title>
        <authorList>
            <person name="Kendall S.L."/>
            <person name="Withers M."/>
            <person name="Soffair C.N."/>
            <person name="Moreland N.J."/>
            <person name="Gurcha S."/>
            <person name="Sidders B."/>
            <person name="Frita R."/>
            <person name="Ten Bokum A."/>
            <person name="Besra G.S."/>
            <person name="Lott J.S."/>
            <person name="Stoker N.G."/>
        </authorList>
    </citation>
    <scope>INDUCTION</scope>
    <source>
        <strain>ATCC 25618 / H37Rv</strain>
    </source>
</reference>
<reference key="3">
    <citation type="journal article" date="2010" name="J. Biol. Chem.">
        <title>A flavin-dependent monooxygenase from Mycobacterium tuberculosis involved in cholesterol catabolism.</title>
        <authorList>
            <person name="Dresen C."/>
            <person name="Lin L.Y."/>
            <person name="D'Angelo I."/>
            <person name="Tocheva E.I."/>
            <person name="Strynadka N."/>
            <person name="Eltis L.D."/>
        </authorList>
    </citation>
    <scope>FUNCTION AS A COMPONENT OF THE FLAVIN-DEPENDENT MONOOXYGENASE</scope>
    <scope>BIOPHYSICOCHEMICAL PROPERTIES</scope>
    <source>
        <strain>ATCC 25618 / H37Rv</strain>
    </source>
</reference>
<feature type="chain" id="PRO_0000404505" description="Flavin-dependent monooxygenase, reductase subunit HsaB">
    <location>
        <begin position="1"/>
        <end position="187"/>
    </location>
</feature>
<feature type="binding site" evidence="1">
    <location>
        <begin position="32"/>
        <end position="36"/>
    </location>
    <ligand>
        <name>FAD</name>
        <dbReference type="ChEBI" id="CHEBI:57692"/>
    </ligand>
</feature>
<feature type="binding site" evidence="1">
    <location>
        <begin position="38"/>
        <end position="39"/>
    </location>
    <ligand>
        <name>FAD</name>
        <dbReference type="ChEBI" id="CHEBI:57692"/>
    </ligand>
</feature>
<feature type="binding site" evidence="1">
    <location>
        <begin position="53"/>
        <end position="55"/>
    </location>
    <ligand>
        <name>FAD</name>
        <dbReference type="ChEBI" id="CHEBI:57692"/>
    </ligand>
</feature>
<feature type="binding site" evidence="1">
    <location>
        <begin position="59"/>
        <end position="60"/>
    </location>
    <ligand>
        <name>FAD</name>
        <dbReference type="ChEBI" id="CHEBI:57692"/>
    </ligand>
</feature>
<feature type="binding site" evidence="1">
    <location>
        <begin position="85"/>
        <end position="86"/>
    </location>
    <ligand>
        <name>FAD</name>
        <dbReference type="ChEBI" id="CHEBI:57692"/>
    </ligand>
</feature>
<feature type="binding site" evidence="1">
    <location>
        <begin position="152"/>
        <end position="155"/>
    </location>
    <ligand>
        <name>NAD(+)</name>
        <dbReference type="ChEBI" id="CHEBI:57540"/>
    </ligand>
</feature>
<sequence length="187" mass="20539">MSAQIDPRTFRSVLGQFCTGITVITTVHDDVPVGFACQSFAALSLEPPLVLFCPTKVSRSWQAIEASGRFCVNVLTEKQKDVSARFGSKEPDKFAGIDWRPSELGSPIIEGSLAYIDCTVASVHDGGDHFVVFGAVESLSEVPAVKPRPLLFYRGDYTGIEPEKTTPAHWRDDLEAFLITTTQDTWL</sequence>
<gene>
    <name type="primary">hsaB</name>
    <name type="ordered locus">Rv3567c</name>
</gene>